<accession>Q0P3L3</accession>
<gene>
    <name type="primary">rps8</name>
    <name type="ordered locus">OtCpg00390</name>
</gene>
<comment type="function">
    <text evidence="1">One of the primary rRNA binding proteins, it binds directly to 16S rRNA central domain where it helps coordinate assembly of the platform of the 30S subunit.</text>
</comment>
<comment type="subunit">
    <text evidence="1">Part of the 30S ribosomal subunit.</text>
</comment>
<comment type="subcellular location">
    <subcellularLocation>
        <location>Plastid</location>
        <location>Chloroplast</location>
    </subcellularLocation>
</comment>
<comment type="similarity">
    <text evidence="2">Belongs to the universal ribosomal protein uS8 family.</text>
</comment>
<feature type="chain" id="PRO_0000290988" description="Small ribosomal subunit protein uS8c">
    <location>
        <begin position="1"/>
        <end position="122"/>
    </location>
</feature>
<dbReference type="EMBL" id="CR954199">
    <property type="protein sequence ID" value="CAL36364.1"/>
    <property type="molecule type" value="Genomic_DNA"/>
</dbReference>
<dbReference type="RefSeq" id="YP_717242.1">
    <property type="nucleotide sequence ID" value="NC_008289.1"/>
</dbReference>
<dbReference type="SMR" id="Q0P3L3"/>
<dbReference type="FunCoup" id="Q0P3L3">
    <property type="interactions" value="120"/>
</dbReference>
<dbReference type="STRING" id="70448.Q0P3L3"/>
<dbReference type="GeneID" id="4238846"/>
<dbReference type="KEGG" id="ota:OstapCp39"/>
<dbReference type="eggNOG" id="KOG1754">
    <property type="taxonomic scope" value="Eukaryota"/>
</dbReference>
<dbReference type="InParanoid" id="Q0P3L3"/>
<dbReference type="Proteomes" id="UP000009170">
    <property type="component" value="Chloroplast"/>
</dbReference>
<dbReference type="GO" id="GO:0009507">
    <property type="term" value="C:chloroplast"/>
    <property type="evidence" value="ECO:0007669"/>
    <property type="project" value="UniProtKB-SubCell"/>
</dbReference>
<dbReference type="GO" id="GO:1990904">
    <property type="term" value="C:ribonucleoprotein complex"/>
    <property type="evidence" value="ECO:0007669"/>
    <property type="project" value="UniProtKB-KW"/>
</dbReference>
<dbReference type="GO" id="GO:0005840">
    <property type="term" value="C:ribosome"/>
    <property type="evidence" value="ECO:0007669"/>
    <property type="project" value="UniProtKB-KW"/>
</dbReference>
<dbReference type="GO" id="GO:0019843">
    <property type="term" value="F:rRNA binding"/>
    <property type="evidence" value="ECO:0007669"/>
    <property type="project" value="UniProtKB-UniRule"/>
</dbReference>
<dbReference type="GO" id="GO:0003735">
    <property type="term" value="F:structural constituent of ribosome"/>
    <property type="evidence" value="ECO:0007669"/>
    <property type="project" value="InterPro"/>
</dbReference>
<dbReference type="GO" id="GO:0006412">
    <property type="term" value="P:translation"/>
    <property type="evidence" value="ECO:0007669"/>
    <property type="project" value="UniProtKB-UniRule"/>
</dbReference>
<dbReference type="FunFam" id="3.30.1490.10:FF:000001">
    <property type="entry name" value="30S ribosomal protein S8"/>
    <property type="match status" value="1"/>
</dbReference>
<dbReference type="Gene3D" id="3.30.1370.30">
    <property type="match status" value="1"/>
</dbReference>
<dbReference type="Gene3D" id="3.30.1490.10">
    <property type="match status" value="1"/>
</dbReference>
<dbReference type="HAMAP" id="MF_01302_B">
    <property type="entry name" value="Ribosomal_uS8_B"/>
    <property type="match status" value="1"/>
</dbReference>
<dbReference type="InterPro" id="IPR000630">
    <property type="entry name" value="Ribosomal_uS8"/>
</dbReference>
<dbReference type="InterPro" id="IPR047863">
    <property type="entry name" value="Ribosomal_uS8_CS"/>
</dbReference>
<dbReference type="InterPro" id="IPR035987">
    <property type="entry name" value="Ribosomal_uS8_sf"/>
</dbReference>
<dbReference type="NCBIfam" id="NF001109">
    <property type="entry name" value="PRK00136.1"/>
    <property type="match status" value="1"/>
</dbReference>
<dbReference type="PANTHER" id="PTHR11758">
    <property type="entry name" value="40S RIBOSOMAL PROTEIN S15A"/>
    <property type="match status" value="1"/>
</dbReference>
<dbReference type="Pfam" id="PF00410">
    <property type="entry name" value="Ribosomal_S8"/>
    <property type="match status" value="1"/>
</dbReference>
<dbReference type="SUPFAM" id="SSF56047">
    <property type="entry name" value="Ribosomal protein S8"/>
    <property type="match status" value="1"/>
</dbReference>
<dbReference type="PROSITE" id="PS00053">
    <property type="entry name" value="RIBOSOMAL_S8"/>
    <property type="match status" value="1"/>
</dbReference>
<keyword id="KW-0150">Chloroplast</keyword>
<keyword id="KW-0934">Plastid</keyword>
<keyword id="KW-1185">Reference proteome</keyword>
<keyword id="KW-0687">Ribonucleoprotein</keyword>
<keyword id="KW-0689">Ribosomal protein</keyword>
<keyword id="KW-0694">RNA-binding</keyword>
<keyword id="KW-0699">rRNA-binding</keyword>
<protein>
    <recommendedName>
        <fullName evidence="2">Small ribosomal subunit protein uS8c</fullName>
    </recommendedName>
    <alternativeName>
        <fullName>30S ribosomal protein S8, chloroplastic</fullName>
    </alternativeName>
</protein>
<proteinExistence type="inferred from homology"/>
<sequence length="122" mass="13505">MVNDTISDMLTRLRNAYLADKEQTSLKATRVVKDIAQVLVQEGFLGPIEQEENGFFTVNLKRGVKQFERVSTPGVRVYANHKQLQPVLNGMGVAVISTSQGIMTDRKARALGIGGEVLCKIW</sequence>
<organism>
    <name type="scientific">Ostreococcus tauri</name>
    <dbReference type="NCBI Taxonomy" id="70448"/>
    <lineage>
        <taxon>Eukaryota</taxon>
        <taxon>Viridiplantae</taxon>
        <taxon>Chlorophyta</taxon>
        <taxon>Mamiellophyceae</taxon>
        <taxon>Mamiellales</taxon>
        <taxon>Bathycoccaceae</taxon>
        <taxon>Ostreococcus</taxon>
    </lineage>
</organism>
<evidence type="ECO:0000250" key="1"/>
<evidence type="ECO:0000305" key="2"/>
<reference key="1">
    <citation type="journal article" date="2007" name="Mol. Biol. Evol.">
        <title>The complete chloroplast and mitochondrial DNA sequence of Ostreococcus tauri: organelle genomes of the smallest eukaryote are examples of compaction.</title>
        <authorList>
            <person name="Robbens S."/>
            <person name="Derelle E."/>
            <person name="Ferraz C."/>
            <person name="Wuyts J."/>
            <person name="Moreau H."/>
            <person name="Van de Peer Y."/>
        </authorList>
    </citation>
    <scope>NUCLEOTIDE SEQUENCE [LARGE SCALE GENOMIC DNA]</scope>
    <source>
        <strain>OTTH0595</strain>
    </source>
</reference>
<name>RR8_OSTTA</name>
<geneLocation type="chloroplast"/>